<gene>
    <name evidence="1" type="primary">hemE</name>
    <name type="ordered locus">ECIAI39_4387</name>
</gene>
<comment type="function">
    <text evidence="1">Catalyzes the decarboxylation of four acetate groups of uroporphyrinogen-III to yield coproporphyrinogen-III.</text>
</comment>
<comment type="catalytic activity">
    <reaction evidence="1">
        <text>uroporphyrinogen III + 4 H(+) = coproporphyrinogen III + 4 CO2</text>
        <dbReference type="Rhea" id="RHEA:19865"/>
        <dbReference type="ChEBI" id="CHEBI:15378"/>
        <dbReference type="ChEBI" id="CHEBI:16526"/>
        <dbReference type="ChEBI" id="CHEBI:57308"/>
        <dbReference type="ChEBI" id="CHEBI:57309"/>
        <dbReference type="EC" id="4.1.1.37"/>
    </reaction>
</comment>
<comment type="pathway">
    <text evidence="1">Porphyrin-containing compound metabolism; protoporphyrin-IX biosynthesis; coproporphyrinogen-III from 5-aminolevulinate: step 4/4.</text>
</comment>
<comment type="subunit">
    <text evidence="1">Homodimer.</text>
</comment>
<comment type="subcellular location">
    <subcellularLocation>
        <location evidence="1">Cytoplasm</location>
    </subcellularLocation>
</comment>
<comment type="similarity">
    <text evidence="1">Belongs to the uroporphyrinogen decarboxylase family.</text>
</comment>
<name>DCUP_ECO7I</name>
<reference key="1">
    <citation type="journal article" date="2009" name="PLoS Genet.">
        <title>Organised genome dynamics in the Escherichia coli species results in highly diverse adaptive paths.</title>
        <authorList>
            <person name="Touchon M."/>
            <person name="Hoede C."/>
            <person name="Tenaillon O."/>
            <person name="Barbe V."/>
            <person name="Baeriswyl S."/>
            <person name="Bidet P."/>
            <person name="Bingen E."/>
            <person name="Bonacorsi S."/>
            <person name="Bouchier C."/>
            <person name="Bouvet O."/>
            <person name="Calteau A."/>
            <person name="Chiapello H."/>
            <person name="Clermont O."/>
            <person name="Cruveiller S."/>
            <person name="Danchin A."/>
            <person name="Diard M."/>
            <person name="Dossat C."/>
            <person name="Karoui M.E."/>
            <person name="Frapy E."/>
            <person name="Garry L."/>
            <person name="Ghigo J.M."/>
            <person name="Gilles A.M."/>
            <person name="Johnson J."/>
            <person name="Le Bouguenec C."/>
            <person name="Lescat M."/>
            <person name="Mangenot S."/>
            <person name="Martinez-Jehanne V."/>
            <person name="Matic I."/>
            <person name="Nassif X."/>
            <person name="Oztas S."/>
            <person name="Petit M.A."/>
            <person name="Pichon C."/>
            <person name="Rouy Z."/>
            <person name="Ruf C.S."/>
            <person name="Schneider D."/>
            <person name="Tourret J."/>
            <person name="Vacherie B."/>
            <person name="Vallenet D."/>
            <person name="Medigue C."/>
            <person name="Rocha E.P.C."/>
            <person name="Denamur E."/>
        </authorList>
    </citation>
    <scope>NUCLEOTIDE SEQUENCE [LARGE SCALE GENOMIC DNA]</scope>
    <source>
        <strain>IAI39 / ExPEC</strain>
    </source>
</reference>
<accession>B7NRT0</accession>
<feature type="chain" id="PRO_1000197522" description="Uroporphyrinogen decarboxylase">
    <location>
        <begin position="1"/>
        <end position="354"/>
    </location>
</feature>
<feature type="binding site" evidence="1">
    <location>
        <begin position="27"/>
        <end position="31"/>
    </location>
    <ligand>
        <name>substrate</name>
    </ligand>
</feature>
<feature type="binding site" evidence="1">
    <location>
        <position position="77"/>
    </location>
    <ligand>
        <name>substrate</name>
    </ligand>
</feature>
<feature type="binding site" evidence="1">
    <location>
        <position position="154"/>
    </location>
    <ligand>
        <name>substrate</name>
    </ligand>
</feature>
<feature type="binding site" evidence="1">
    <location>
        <position position="209"/>
    </location>
    <ligand>
        <name>substrate</name>
    </ligand>
</feature>
<feature type="binding site" evidence="1">
    <location>
        <position position="327"/>
    </location>
    <ligand>
        <name>substrate</name>
    </ligand>
</feature>
<feature type="site" description="Transition state stabilizer" evidence="1">
    <location>
        <position position="77"/>
    </location>
</feature>
<proteinExistence type="inferred from homology"/>
<keyword id="KW-0963">Cytoplasm</keyword>
<keyword id="KW-0210">Decarboxylase</keyword>
<keyword id="KW-0456">Lyase</keyword>
<keyword id="KW-0627">Porphyrin biosynthesis</keyword>
<evidence type="ECO:0000255" key="1">
    <source>
        <dbReference type="HAMAP-Rule" id="MF_00218"/>
    </source>
</evidence>
<protein>
    <recommendedName>
        <fullName evidence="1">Uroporphyrinogen decarboxylase</fullName>
        <shortName evidence="1">UPD</shortName>
        <shortName evidence="1">URO-D</shortName>
        <ecNumber evidence="1">4.1.1.37</ecNumber>
    </recommendedName>
</protein>
<organism>
    <name type="scientific">Escherichia coli O7:K1 (strain IAI39 / ExPEC)</name>
    <dbReference type="NCBI Taxonomy" id="585057"/>
    <lineage>
        <taxon>Bacteria</taxon>
        <taxon>Pseudomonadati</taxon>
        <taxon>Pseudomonadota</taxon>
        <taxon>Gammaproteobacteria</taxon>
        <taxon>Enterobacterales</taxon>
        <taxon>Enterobacteriaceae</taxon>
        <taxon>Escherichia</taxon>
    </lineage>
</organism>
<dbReference type="EC" id="4.1.1.37" evidence="1"/>
<dbReference type="EMBL" id="CU928164">
    <property type="protein sequence ID" value="CAR20493.1"/>
    <property type="molecule type" value="Genomic_DNA"/>
</dbReference>
<dbReference type="RefSeq" id="WP_000137652.1">
    <property type="nucleotide sequence ID" value="NC_011750.1"/>
</dbReference>
<dbReference type="RefSeq" id="YP_002410261.1">
    <property type="nucleotide sequence ID" value="NC_011750.1"/>
</dbReference>
<dbReference type="SMR" id="B7NRT0"/>
<dbReference type="STRING" id="585057.ECIAI39_4387"/>
<dbReference type="KEGG" id="ect:ECIAI39_4387"/>
<dbReference type="PATRIC" id="fig|585057.6.peg.4533"/>
<dbReference type="HOGENOM" id="CLU_040933_0_0_6"/>
<dbReference type="UniPathway" id="UPA00251">
    <property type="reaction ID" value="UER00321"/>
</dbReference>
<dbReference type="Proteomes" id="UP000000749">
    <property type="component" value="Chromosome"/>
</dbReference>
<dbReference type="GO" id="GO:0005829">
    <property type="term" value="C:cytosol"/>
    <property type="evidence" value="ECO:0007669"/>
    <property type="project" value="TreeGrafter"/>
</dbReference>
<dbReference type="GO" id="GO:0004853">
    <property type="term" value="F:uroporphyrinogen decarboxylase activity"/>
    <property type="evidence" value="ECO:0007669"/>
    <property type="project" value="UniProtKB-UniRule"/>
</dbReference>
<dbReference type="GO" id="GO:0019353">
    <property type="term" value="P:protoporphyrinogen IX biosynthetic process from glutamate"/>
    <property type="evidence" value="ECO:0007669"/>
    <property type="project" value="TreeGrafter"/>
</dbReference>
<dbReference type="CDD" id="cd00717">
    <property type="entry name" value="URO-D"/>
    <property type="match status" value="1"/>
</dbReference>
<dbReference type="FunFam" id="3.20.20.210:FF:000001">
    <property type="entry name" value="Uroporphyrinogen decarboxylase"/>
    <property type="match status" value="1"/>
</dbReference>
<dbReference type="Gene3D" id="3.20.20.210">
    <property type="match status" value="1"/>
</dbReference>
<dbReference type="HAMAP" id="MF_00218">
    <property type="entry name" value="URO_D"/>
    <property type="match status" value="1"/>
</dbReference>
<dbReference type="InterPro" id="IPR038071">
    <property type="entry name" value="UROD/MetE-like_sf"/>
</dbReference>
<dbReference type="InterPro" id="IPR006361">
    <property type="entry name" value="Uroporphyrinogen_deCO2ase_HemE"/>
</dbReference>
<dbReference type="InterPro" id="IPR000257">
    <property type="entry name" value="Uroporphyrinogen_deCOase"/>
</dbReference>
<dbReference type="NCBIfam" id="TIGR01464">
    <property type="entry name" value="hemE"/>
    <property type="match status" value="1"/>
</dbReference>
<dbReference type="PANTHER" id="PTHR21091">
    <property type="entry name" value="METHYLTETRAHYDROFOLATE:HOMOCYSTEINE METHYLTRANSFERASE RELATED"/>
    <property type="match status" value="1"/>
</dbReference>
<dbReference type="PANTHER" id="PTHR21091:SF169">
    <property type="entry name" value="UROPORPHYRINOGEN DECARBOXYLASE"/>
    <property type="match status" value="1"/>
</dbReference>
<dbReference type="Pfam" id="PF01208">
    <property type="entry name" value="URO-D"/>
    <property type="match status" value="1"/>
</dbReference>
<dbReference type="SUPFAM" id="SSF51726">
    <property type="entry name" value="UROD/MetE-like"/>
    <property type="match status" value="1"/>
</dbReference>
<dbReference type="PROSITE" id="PS00906">
    <property type="entry name" value="UROD_1"/>
    <property type="match status" value="1"/>
</dbReference>
<dbReference type="PROSITE" id="PS00907">
    <property type="entry name" value="UROD_2"/>
    <property type="match status" value="1"/>
</dbReference>
<sequence length="354" mass="39102">MTELKNDRYLRALLRQPVDVTPVWMMRQAGRYLPEYKATRAQAGDFMSLCKNAELACEVTLQPLRRYPLDAAILFSDILTVPDAMGLGLYFEAGEGPRFTSPVTCKADVDKLPIPDPEDELGYVMNAVRTIRRELKGEVPLIGFSGSPWTLATYMVEGGSSKAFTVIKKMMYADPQALHALLDKLAKSVTLYLNAQIKAGAQAVMIFDTWGGVLTGRDYQQFSLYYMHKIVDGLLRENDGRRVPVTLFTKGGGQWLEAMAETGCDALGLDWTTDIADARRRVGNKVALQGNMDPSMLYAPPARIEEEVASILAGFGHGEGHVFNLGHGIHQDVPPEHAGVFVEAVHRLSAPYHL</sequence>